<gene>
    <name type="primary">eif2a</name>
    <name type="ordered locus">AF_0527</name>
</gene>
<comment type="function">
    <text evidence="1">eIF-2 functions in the early steps of protein synthesis by forming a ternary complex with GTP and initiator tRNA.</text>
</comment>
<comment type="subunit">
    <text evidence="1">Heterotrimer composed of an alpha, a beta and a gamma chain.</text>
</comment>
<comment type="similarity">
    <text evidence="2">Belongs to the eIF-2-alpha family.</text>
</comment>
<reference key="1">
    <citation type="journal article" date="1997" name="Nature">
        <title>The complete genome sequence of the hyperthermophilic, sulphate-reducing archaeon Archaeoglobus fulgidus.</title>
        <authorList>
            <person name="Klenk H.-P."/>
            <person name="Clayton R.A."/>
            <person name="Tomb J.-F."/>
            <person name="White O."/>
            <person name="Nelson K.E."/>
            <person name="Ketchum K.A."/>
            <person name="Dodson R.J."/>
            <person name="Gwinn M.L."/>
            <person name="Hickey E.K."/>
            <person name="Peterson J.D."/>
            <person name="Richardson D.L."/>
            <person name="Kerlavage A.R."/>
            <person name="Graham D.E."/>
            <person name="Kyrpides N.C."/>
            <person name="Fleischmann R.D."/>
            <person name="Quackenbush J."/>
            <person name="Lee N.H."/>
            <person name="Sutton G.G."/>
            <person name="Gill S.R."/>
            <person name="Kirkness E.F."/>
            <person name="Dougherty B.A."/>
            <person name="McKenney K."/>
            <person name="Adams M.D."/>
            <person name="Loftus B.J."/>
            <person name="Peterson S.N."/>
            <person name="Reich C.I."/>
            <person name="McNeil L.K."/>
            <person name="Badger J.H."/>
            <person name="Glodek A."/>
            <person name="Zhou L."/>
            <person name="Overbeek R."/>
            <person name="Gocayne J.D."/>
            <person name="Weidman J.F."/>
            <person name="McDonald L.A."/>
            <person name="Utterback T.R."/>
            <person name="Cotton M.D."/>
            <person name="Spriggs T."/>
            <person name="Artiach P."/>
            <person name="Kaine B.P."/>
            <person name="Sykes S.M."/>
            <person name="Sadow P.W."/>
            <person name="D'Andrea K.P."/>
            <person name="Bowman C."/>
            <person name="Fujii C."/>
            <person name="Garland S.A."/>
            <person name="Mason T.M."/>
            <person name="Olsen G.J."/>
            <person name="Fraser C.M."/>
            <person name="Smith H.O."/>
            <person name="Woese C.R."/>
            <person name="Venter J.C."/>
        </authorList>
    </citation>
    <scope>NUCLEOTIDE SEQUENCE [LARGE SCALE GENOMIC DNA]</scope>
    <source>
        <strain>ATCC 49558 / DSM 4304 / JCM 9628 / NBRC 100126 / VC-16</strain>
    </source>
</reference>
<accession>O29723</accession>
<proteinExistence type="inferred from homology"/>
<keyword id="KW-0396">Initiation factor</keyword>
<keyword id="KW-0648">Protein biosynthesis</keyword>
<keyword id="KW-1185">Reference proteome</keyword>
<keyword id="KW-0694">RNA-binding</keyword>
<sequence length="267" mass="30509">MKEKRLIIKRSGYPSKGEIVIGTVKRVLDFGAFVSLDEYEGREGMVHISEVASGWIKDIREHVKKGQKVICKVLDVNPKRGHIDLSIKDVNERQRREKLQQWKNEMKAFKWLEIIGEKLNIDFKELEKIGKKLMKEYDSVYSAFEEAAFEGYEVLAPIVGEEFAKEMAEIARENIKPKRVKVRGYFELKSSASDGIERIKKALLEAKKALVNGVEMKLEYVGAPKYRIVVEADDYKTAENVLKKATENVLKAIKKLGGEGNFIREAA</sequence>
<name>IF2A_ARCFU</name>
<evidence type="ECO:0000250" key="1"/>
<evidence type="ECO:0000305" key="2"/>
<protein>
    <recommendedName>
        <fullName>Translation initiation factor 2 subunit alpha</fullName>
    </recommendedName>
    <alternativeName>
        <fullName>aIF2-alpha</fullName>
    </alternativeName>
    <alternativeName>
        <fullName>eIF-2-alpha</fullName>
    </alternativeName>
</protein>
<feature type="chain" id="PRO_0000137391" description="Translation initiation factor 2 subunit alpha">
    <location>
        <begin position="1"/>
        <end position="267"/>
    </location>
</feature>
<feature type="domain" description="S1 motif">
    <location>
        <begin position="17"/>
        <end position="88"/>
    </location>
</feature>
<organism>
    <name type="scientific">Archaeoglobus fulgidus (strain ATCC 49558 / DSM 4304 / JCM 9628 / NBRC 100126 / VC-16)</name>
    <dbReference type="NCBI Taxonomy" id="224325"/>
    <lineage>
        <taxon>Archaea</taxon>
        <taxon>Methanobacteriati</taxon>
        <taxon>Methanobacteriota</taxon>
        <taxon>Archaeoglobi</taxon>
        <taxon>Archaeoglobales</taxon>
        <taxon>Archaeoglobaceae</taxon>
        <taxon>Archaeoglobus</taxon>
    </lineage>
</organism>
<dbReference type="EMBL" id="AE000782">
    <property type="protein sequence ID" value="AAB90710.1"/>
    <property type="molecule type" value="Genomic_DNA"/>
</dbReference>
<dbReference type="PIR" id="G69315">
    <property type="entry name" value="G69315"/>
</dbReference>
<dbReference type="RefSeq" id="WP_010878034.1">
    <property type="nucleotide sequence ID" value="NC_000917.1"/>
</dbReference>
<dbReference type="SMR" id="O29723"/>
<dbReference type="STRING" id="224325.AF_0527"/>
<dbReference type="PaxDb" id="224325-AF_0527"/>
<dbReference type="EnsemblBacteria" id="AAB90710">
    <property type="protein sequence ID" value="AAB90710"/>
    <property type="gene ID" value="AF_0527"/>
</dbReference>
<dbReference type="KEGG" id="afu:AF_0527"/>
<dbReference type="eggNOG" id="arCOG04107">
    <property type="taxonomic scope" value="Archaea"/>
</dbReference>
<dbReference type="HOGENOM" id="CLU_033458_0_2_2"/>
<dbReference type="OrthoDB" id="84794at2157"/>
<dbReference type="PhylomeDB" id="O29723"/>
<dbReference type="Proteomes" id="UP000002199">
    <property type="component" value="Chromosome"/>
</dbReference>
<dbReference type="GO" id="GO:0043022">
    <property type="term" value="F:ribosome binding"/>
    <property type="evidence" value="ECO:0007669"/>
    <property type="project" value="TreeGrafter"/>
</dbReference>
<dbReference type="GO" id="GO:0003723">
    <property type="term" value="F:RNA binding"/>
    <property type="evidence" value="ECO:0007669"/>
    <property type="project" value="UniProtKB-UniRule"/>
</dbReference>
<dbReference type="GO" id="GO:0003743">
    <property type="term" value="F:translation initiation factor activity"/>
    <property type="evidence" value="ECO:0007669"/>
    <property type="project" value="UniProtKB-UniRule"/>
</dbReference>
<dbReference type="CDD" id="cd04452">
    <property type="entry name" value="S1_IF2_alpha"/>
    <property type="match status" value="1"/>
</dbReference>
<dbReference type="FunFam" id="2.40.50.140:FF:000015">
    <property type="entry name" value="Eukaryotic translation initiation factor 2 subunit alpha"/>
    <property type="match status" value="1"/>
</dbReference>
<dbReference type="FunFam" id="3.30.70.1130:FF:000002">
    <property type="entry name" value="Translation initiation factor 2 subunit alpha"/>
    <property type="match status" value="1"/>
</dbReference>
<dbReference type="Gene3D" id="3.30.70.1130">
    <property type="entry name" value="EIF_2_alpha"/>
    <property type="match status" value="1"/>
</dbReference>
<dbReference type="Gene3D" id="2.40.50.140">
    <property type="entry name" value="Nucleic acid-binding proteins"/>
    <property type="match status" value="1"/>
</dbReference>
<dbReference type="Gene3D" id="1.10.150.190">
    <property type="entry name" value="Translation initiation factor 2, subunit 1, domain 2"/>
    <property type="match status" value="1"/>
</dbReference>
<dbReference type="HAMAP" id="MF_00231">
    <property type="entry name" value="eIF_2_alpha"/>
    <property type="match status" value="1"/>
</dbReference>
<dbReference type="InterPro" id="IPR012340">
    <property type="entry name" value="NA-bd_OB-fold"/>
</dbReference>
<dbReference type="InterPro" id="IPR003029">
    <property type="entry name" value="S1_domain"/>
</dbReference>
<dbReference type="InterPro" id="IPR044126">
    <property type="entry name" value="S1_IF2_alpha"/>
</dbReference>
<dbReference type="InterPro" id="IPR022964">
    <property type="entry name" value="TIF2_asu_arc"/>
</dbReference>
<dbReference type="InterPro" id="IPR024055">
    <property type="entry name" value="TIF2_asu_C"/>
</dbReference>
<dbReference type="InterPro" id="IPR024054">
    <property type="entry name" value="TIF2_asu_middle_sf"/>
</dbReference>
<dbReference type="InterPro" id="IPR011488">
    <property type="entry name" value="TIF_2_asu"/>
</dbReference>
<dbReference type="NCBIfam" id="NF003062">
    <property type="entry name" value="PRK03987.1-1"/>
    <property type="match status" value="1"/>
</dbReference>
<dbReference type="NCBIfam" id="NF003064">
    <property type="entry name" value="PRK03987.1-4"/>
    <property type="match status" value="1"/>
</dbReference>
<dbReference type="PANTHER" id="PTHR10602">
    <property type="entry name" value="EUKARYOTIC TRANSLATION INITIATION FACTOR 2 SUBUNIT 1"/>
    <property type="match status" value="1"/>
</dbReference>
<dbReference type="PANTHER" id="PTHR10602:SF0">
    <property type="entry name" value="EUKARYOTIC TRANSLATION INITIATION FACTOR 2 SUBUNIT 1"/>
    <property type="match status" value="1"/>
</dbReference>
<dbReference type="Pfam" id="PF07541">
    <property type="entry name" value="EIF_2_alpha"/>
    <property type="match status" value="1"/>
</dbReference>
<dbReference type="Pfam" id="PF00575">
    <property type="entry name" value="S1"/>
    <property type="match status" value="1"/>
</dbReference>
<dbReference type="SMART" id="SM00316">
    <property type="entry name" value="S1"/>
    <property type="match status" value="1"/>
</dbReference>
<dbReference type="SUPFAM" id="SSF110993">
    <property type="entry name" value="eIF-2-alpha, C-terminal domain"/>
    <property type="match status" value="1"/>
</dbReference>
<dbReference type="SUPFAM" id="SSF116742">
    <property type="entry name" value="eIF2alpha middle domain-like"/>
    <property type="match status" value="1"/>
</dbReference>
<dbReference type="SUPFAM" id="SSF50249">
    <property type="entry name" value="Nucleic acid-binding proteins"/>
    <property type="match status" value="1"/>
</dbReference>
<dbReference type="PROSITE" id="PS50126">
    <property type="entry name" value="S1"/>
    <property type="match status" value="1"/>
</dbReference>